<feature type="chain" id="PRO_0000367937" description="Probable protein phosphatase 2C 5">
    <location>
        <begin position="1"/>
        <end position="428"/>
    </location>
</feature>
<feature type="domain" description="PPM-type phosphatase" evidence="2">
    <location>
        <begin position="25"/>
        <end position="297"/>
    </location>
</feature>
<feature type="binding site" evidence="1">
    <location>
        <position position="73"/>
    </location>
    <ligand>
        <name>Mn(2+)</name>
        <dbReference type="ChEBI" id="CHEBI:29035"/>
        <label>1</label>
    </ligand>
</feature>
<feature type="binding site" evidence="1">
    <location>
        <position position="73"/>
    </location>
    <ligand>
        <name>Mn(2+)</name>
        <dbReference type="ChEBI" id="CHEBI:29035"/>
        <label>2</label>
    </ligand>
</feature>
<feature type="binding site" evidence="1">
    <location>
        <position position="74"/>
    </location>
    <ligand>
        <name>Mn(2+)</name>
        <dbReference type="ChEBI" id="CHEBI:29035"/>
        <label>1</label>
    </ligand>
</feature>
<feature type="binding site" evidence="1">
    <location>
        <position position="249"/>
    </location>
    <ligand>
        <name>Mn(2+)</name>
        <dbReference type="ChEBI" id="CHEBI:29035"/>
        <label>2</label>
    </ligand>
</feature>
<feature type="binding site" evidence="1">
    <location>
        <position position="288"/>
    </location>
    <ligand>
        <name>Mn(2+)</name>
        <dbReference type="ChEBI" id="CHEBI:29035"/>
        <label>2</label>
    </ligand>
</feature>
<comment type="catalytic activity">
    <reaction>
        <text>O-phospho-L-seryl-[protein] + H2O = L-seryl-[protein] + phosphate</text>
        <dbReference type="Rhea" id="RHEA:20629"/>
        <dbReference type="Rhea" id="RHEA-COMP:9863"/>
        <dbReference type="Rhea" id="RHEA-COMP:11604"/>
        <dbReference type="ChEBI" id="CHEBI:15377"/>
        <dbReference type="ChEBI" id="CHEBI:29999"/>
        <dbReference type="ChEBI" id="CHEBI:43474"/>
        <dbReference type="ChEBI" id="CHEBI:83421"/>
        <dbReference type="EC" id="3.1.3.16"/>
    </reaction>
</comment>
<comment type="catalytic activity">
    <reaction>
        <text>O-phospho-L-threonyl-[protein] + H2O = L-threonyl-[protein] + phosphate</text>
        <dbReference type="Rhea" id="RHEA:47004"/>
        <dbReference type="Rhea" id="RHEA-COMP:11060"/>
        <dbReference type="Rhea" id="RHEA-COMP:11605"/>
        <dbReference type="ChEBI" id="CHEBI:15377"/>
        <dbReference type="ChEBI" id="CHEBI:30013"/>
        <dbReference type="ChEBI" id="CHEBI:43474"/>
        <dbReference type="ChEBI" id="CHEBI:61977"/>
        <dbReference type="EC" id="3.1.3.16"/>
    </reaction>
</comment>
<comment type="cofactor">
    <cofactor evidence="1">
        <name>Mg(2+)</name>
        <dbReference type="ChEBI" id="CHEBI:18420"/>
    </cofactor>
    <cofactor evidence="1">
        <name>Mn(2+)</name>
        <dbReference type="ChEBI" id="CHEBI:29035"/>
    </cofactor>
    <text evidence="1">Binds 2 magnesium or manganese ions per subunit.</text>
</comment>
<comment type="similarity">
    <text evidence="3">Belongs to the PP2C family.</text>
</comment>
<comment type="sequence caution" evidence="3">
    <conflict type="frameshift">
        <sequence resource="EMBL-CDS" id="AAL31893"/>
    </conflict>
</comment>
<organism>
    <name type="scientific">Arabidopsis thaliana</name>
    <name type="common">Mouse-ear cress</name>
    <dbReference type="NCBI Taxonomy" id="3702"/>
    <lineage>
        <taxon>Eukaryota</taxon>
        <taxon>Viridiplantae</taxon>
        <taxon>Streptophyta</taxon>
        <taxon>Embryophyta</taxon>
        <taxon>Tracheophyta</taxon>
        <taxon>Spermatophyta</taxon>
        <taxon>Magnoliopsida</taxon>
        <taxon>eudicotyledons</taxon>
        <taxon>Gunneridae</taxon>
        <taxon>Pentapetalae</taxon>
        <taxon>rosids</taxon>
        <taxon>malvids</taxon>
        <taxon>Brassicales</taxon>
        <taxon>Brassicaceae</taxon>
        <taxon>Camelineae</taxon>
        <taxon>Arabidopsis</taxon>
    </lineage>
</organism>
<proteinExistence type="evidence at transcript level"/>
<sequence>MSVSKASRTQHSLVPLATLIGRELRSEKVEKPFVKYGQAALAKKGEDYFLIKTDCERVPGDPSSAFSVFGIFDGHNGNSAAIYTKEHLLENVVSAIPQGASRDEWLQALPRALVAGFVKTDIEFQQKGETSGTTVTFVIIDGWTITVASVGDSRCILDTQGGVVSLLTVDHRLEENVEERERITASGGEVGRLNVFGGNEVGPLRCWPGGLCLSRSIGDTDVGEFIVPIPHVKQVKLPDAGGRLIIASDGIWDILSSDVAAKACRGLSADLAAKLVVKEALRTKGLKDDTTCVVVDIVPSGHLSLAPAPMKKQNPFTSFLSRKNHMDTNNKNGNKLSAVGVVEELFEEGSAVLADRLGKDLLSNTETGLLKCAVCQIDESPSEDLSSNGGSIISSASKRWEGPFLCTICKKKKDAMEGKRPSKGSVTT</sequence>
<name>P2C05_ARATH</name>
<protein>
    <recommendedName>
        <fullName>Probable protein phosphatase 2C 5</fullName>
        <shortName>AtPP2C05</shortName>
        <ecNumber>3.1.3.16</ecNumber>
    </recommendedName>
</protein>
<evidence type="ECO:0000250" key="1"/>
<evidence type="ECO:0000255" key="2">
    <source>
        <dbReference type="PROSITE-ProRule" id="PRU01082"/>
    </source>
</evidence>
<evidence type="ECO:0000305" key="3"/>
<keyword id="KW-0378">Hydrolase</keyword>
<keyword id="KW-0460">Magnesium</keyword>
<keyword id="KW-0464">Manganese</keyword>
<keyword id="KW-0479">Metal-binding</keyword>
<keyword id="KW-0904">Protein phosphatase</keyword>
<keyword id="KW-1185">Reference proteome</keyword>
<accession>O80492</accession>
<accession>Q8W588</accession>
<dbReference type="EC" id="3.1.3.16"/>
<dbReference type="EMBL" id="AC003114">
    <property type="protein sequence ID" value="AAC24088.1"/>
    <property type="molecule type" value="Genomic_DNA"/>
</dbReference>
<dbReference type="EMBL" id="CP002684">
    <property type="protein sequence ID" value="AEE28405.1"/>
    <property type="molecule type" value="Genomic_DNA"/>
</dbReference>
<dbReference type="EMBL" id="CP002684">
    <property type="protein sequence ID" value="AEE28406.1"/>
    <property type="molecule type" value="Genomic_DNA"/>
</dbReference>
<dbReference type="EMBL" id="AF419561">
    <property type="protein sequence ID" value="AAL31893.1"/>
    <property type="status" value="ALT_FRAME"/>
    <property type="molecule type" value="mRNA"/>
</dbReference>
<dbReference type="EMBL" id="BT029756">
    <property type="protein sequence ID" value="ABM06026.1"/>
    <property type="molecule type" value="mRNA"/>
</dbReference>
<dbReference type="EMBL" id="AK316880">
    <property type="protein sequence ID" value="BAH19588.1"/>
    <property type="molecule type" value="mRNA"/>
</dbReference>
<dbReference type="PIR" id="A86224">
    <property type="entry name" value="A86224"/>
</dbReference>
<dbReference type="RefSeq" id="NP_172388.1">
    <property type="nucleotide sequence ID" value="NM_100786.4"/>
</dbReference>
<dbReference type="RefSeq" id="NP_849621.1">
    <property type="nucleotide sequence ID" value="NM_179290.3"/>
</dbReference>
<dbReference type="SMR" id="O80492"/>
<dbReference type="BioGRID" id="22677">
    <property type="interactions" value="1"/>
</dbReference>
<dbReference type="FunCoup" id="O80492">
    <property type="interactions" value="679"/>
</dbReference>
<dbReference type="IntAct" id="O80492">
    <property type="interactions" value="1"/>
</dbReference>
<dbReference type="STRING" id="3702.O80492"/>
<dbReference type="iPTMnet" id="O80492"/>
<dbReference type="PaxDb" id="3702-AT1G09160.1"/>
<dbReference type="ProteomicsDB" id="248700"/>
<dbReference type="EnsemblPlants" id="AT1G09160.1">
    <property type="protein sequence ID" value="AT1G09160.1"/>
    <property type="gene ID" value="AT1G09160"/>
</dbReference>
<dbReference type="EnsemblPlants" id="AT1G09160.2">
    <property type="protein sequence ID" value="AT1G09160.2"/>
    <property type="gene ID" value="AT1G09160"/>
</dbReference>
<dbReference type="GeneID" id="837436"/>
<dbReference type="Gramene" id="AT1G09160.1">
    <property type="protein sequence ID" value="AT1G09160.1"/>
    <property type="gene ID" value="AT1G09160"/>
</dbReference>
<dbReference type="Gramene" id="AT1G09160.2">
    <property type="protein sequence ID" value="AT1G09160.2"/>
    <property type="gene ID" value="AT1G09160"/>
</dbReference>
<dbReference type="KEGG" id="ath:AT1G09160"/>
<dbReference type="Araport" id="AT1G09160"/>
<dbReference type="TAIR" id="AT1G09160"/>
<dbReference type="eggNOG" id="KOG0698">
    <property type="taxonomic scope" value="Eukaryota"/>
</dbReference>
<dbReference type="HOGENOM" id="CLU_013173_3_1_1"/>
<dbReference type="InParanoid" id="O80492"/>
<dbReference type="OMA" id="PRCCSEM"/>
<dbReference type="OrthoDB" id="10264738at2759"/>
<dbReference type="PhylomeDB" id="O80492"/>
<dbReference type="PRO" id="PR:O80492"/>
<dbReference type="Proteomes" id="UP000006548">
    <property type="component" value="Chromosome 1"/>
</dbReference>
<dbReference type="ExpressionAtlas" id="O80492">
    <property type="expression patterns" value="baseline and differential"/>
</dbReference>
<dbReference type="GO" id="GO:0005886">
    <property type="term" value="C:plasma membrane"/>
    <property type="evidence" value="ECO:0007005"/>
    <property type="project" value="TAIR"/>
</dbReference>
<dbReference type="GO" id="GO:0046872">
    <property type="term" value="F:metal ion binding"/>
    <property type="evidence" value="ECO:0007669"/>
    <property type="project" value="UniProtKB-KW"/>
</dbReference>
<dbReference type="GO" id="GO:0004722">
    <property type="term" value="F:protein serine/threonine phosphatase activity"/>
    <property type="evidence" value="ECO:0007669"/>
    <property type="project" value="UniProtKB-EC"/>
</dbReference>
<dbReference type="CDD" id="cd00143">
    <property type="entry name" value="PP2Cc"/>
    <property type="match status" value="1"/>
</dbReference>
<dbReference type="FunFam" id="3.60.40.10:FF:000013">
    <property type="entry name" value="probable protein phosphatase 2C 5"/>
    <property type="match status" value="1"/>
</dbReference>
<dbReference type="Gene3D" id="3.60.40.10">
    <property type="entry name" value="PPM-type phosphatase domain"/>
    <property type="match status" value="1"/>
</dbReference>
<dbReference type="InterPro" id="IPR015655">
    <property type="entry name" value="PP2C"/>
</dbReference>
<dbReference type="InterPro" id="IPR036457">
    <property type="entry name" value="PPM-type-like_dom_sf"/>
</dbReference>
<dbReference type="InterPro" id="IPR001932">
    <property type="entry name" value="PPM-type_phosphatase-like_dom"/>
</dbReference>
<dbReference type="PANTHER" id="PTHR47992">
    <property type="entry name" value="PROTEIN PHOSPHATASE"/>
    <property type="match status" value="1"/>
</dbReference>
<dbReference type="Pfam" id="PF00481">
    <property type="entry name" value="PP2C"/>
    <property type="match status" value="1"/>
</dbReference>
<dbReference type="SMART" id="SM00331">
    <property type="entry name" value="PP2C_SIG"/>
    <property type="match status" value="1"/>
</dbReference>
<dbReference type="SMART" id="SM00332">
    <property type="entry name" value="PP2Cc"/>
    <property type="match status" value="1"/>
</dbReference>
<dbReference type="SUPFAM" id="SSF81606">
    <property type="entry name" value="PP2C-like"/>
    <property type="match status" value="1"/>
</dbReference>
<dbReference type="PROSITE" id="PS51746">
    <property type="entry name" value="PPM_2"/>
    <property type="match status" value="1"/>
</dbReference>
<gene>
    <name type="ordered locus">At1g09160</name>
    <name type="ORF">T12M4.15</name>
</gene>
<reference key="1">
    <citation type="journal article" date="2000" name="Nature">
        <title>Sequence and analysis of chromosome 1 of the plant Arabidopsis thaliana.</title>
        <authorList>
            <person name="Theologis A."/>
            <person name="Ecker J.R."/>
            <person name="Palm C.J."/>
            <person name="Federspiel N.A."/>
            <person name="Kaul S."/>
            <person name="White O."/>
            <person name="Alonso J."/>
            <person name="Altafi H."/>
            <person name="Araujo R."/>
            <person name="Bowman C.L."/>
            <person name="Brooks S.Y."/>
            <person name="Buehler E."/>
            <person name="Chan A."/>
            <person name="Chao Q."/>
            <person name="Chen H."/>
            <person name="Cheuk R.F."/>
            <person name="Chin C.W."/>
            <person name="Chung M.K."/>
            <person name="Conn L."/>
            <person name="Conway A.B."/>
            <person name="Conway A.R."/>
            <person name="Creasy T.H."/>
            <person name="Dewar K."/>
            <person name="Dunn P."/>
            <person name="Etgu P."/>
            <person name="Feldblyum T.V."/>
            <person name="Feng J.-D."/>
            <person name="Fong B."/>
            <person name="Fujii C.Y."/>
            <person name="Gill J.E."/>
            <person name="Goldsmith A.D."/>
            <person name="Haas B."/>
            <person name="Hansen N.F."/>
            <person name="Hughes B."/>
            <person name="Huizar L."/>
            <person name="Hunter J.L."/>
            <person name="Jenkins J."/>
            <person name="Johnson-Hopson C."/>
            <person name="Khan S."/>
            <person name="Khaykin E."/>
            <person name="Kim C.J."/>
            <person name="Koo H.L."/>
            <person name="Kremenetskaia I."/>
            <person name="Kurtz D.B."/>
            <person name="Kwan A."/>
            <person name="Lam B."/>
            <person name="Langin-Hooper S."/>
            <person name="Lee A."/>
            <person name="Lee J.M."/>
            <person name="Lenz C.A."/>
            <person name="Li J.H."/>
            <person name="Li Y.-P."/>
            <person name="Lin X."/>
            <person name="Liu S.X."/>
            <person name="Liu Z.A."/>
            <person name="Luros J.S."/>
            <person name="Maiti R."/>
            <person name="Marziali A."/>
            <person name="Militscher J."/>
            <person name="Miranda M."/>
            <person name="Nguyen M."/>
            <person name="Nierman W.C."/>
            <person name="Osborne B.I."/>
            <person name="Pai G."/>
            <person name="Peterson J."/>
            <person name="Pham P.K."/>
            <person name="Rizzo M."/>
            <person name="Rooney T."/>
            <person name="Rowley D."/>
            <person name="Sakano H."/>
            <person name="Salzberg S.L."/>
            <person name="Schwartz J.R."/>
            <person name="Shinn P."/>
            <person name="Southwick A.M."/>
            <person name="Sun H."/>
            <person name="Tallon L.J."/>
            <person name="Tambunga G."/>
            <person name="Toriumi M.J."/>
            <person name="Town C.D."/>
            <person name="Utterback T."/>
            <person name="Van Aken S."/>
            <person name="Vaysberg M."/>
            <person name="Vysotskaia V.S."/>
            <person name="Walker M."/>
            <person name="Wu D."/>
            <person name="Yu G."/>
            <person name="Fraser C.M."/>
            <person name="Venter J.C."/>
            <person name="Davis R.W."/>
        </authorList>
    </citation>
    <scope>NUCLEOTIDE SEQUENCE [LARGE SCALE GENOMIC DNA]</scope>
    <source>
        <strain>cv. Columbia</strain>
    </source>
</reference>
<reference key="2">
    <citation type="journal article" date="2017" name="Plant J.">
        <title>Araport11: a complete reannotation of the Arabidopsis thaliana reference genome.</title>
        <authorList>
            <person name="Cheng C.Y."/>
            <person name="Krishnakumar V."/>
            <person name="Chan A.P."/>
            <person name="Thibaud-Nissen F."/>
            <person name="Schobel S."/>
            <person name="Town C.D."/>
        </authorList>
    </citation>
    <scope>GENOME REANNOTATION</scope>
    <source>
        <strain>cv. Columbia</strain>
    </source>
</reference>
<reference key="3">
    <citation type="journal article" date="2003" name="Science">
        <title>Empirical analysis of transcriptional activity in the Arabidopsis genome.</title>
        <authorList>
            <person name="Yamada K."/>
            <person name="Lim J."/>
            <person name="Dale J.M."/>
            <person name="Chen H."/>
            <person name="Shinn P."/>
            <person name="Palm C.J."/>
            <person name="Southwick A.M."/>
            <person name="Wu H.C."/>
            <person name="Kim C.J."/>
            <person name="Nguyen M."/>
            <person name="Pham P.K."/>
            <person name="Cheuk R.F."/>
            <person name="Karlin-Newmann G."/>
            <person name="Liu S.X."/>
            <person name="Lam B."/>
            <person name="Sakano H."/>
            <person name="Wu T."/>
            <person name="Yu G."/>
            <person name="Miranda M."/>
            <person name="Quach H.L."/>
            <person name="Tripp M."/>
            <person name="Chang C.H."/>
            <person name="Lee J.M."/>
            <person name="Toriumi M.J."/>
            <person name="Chan M.M."/>
            <person name="Tang C.C."/>
            <person name="Onodera C.S."/>
            <person name="Deng J.M."/>
            <person name="Akiyama K."/>
            <person name="Ansari Y."/>
            <person name="Arakawa T."/>
            <person name="Banh J."/>
            <person name="Banno F."/>
            <person name="Bowser L."/>
            <person name="Brooks S.Y."/>
            <person name="Carninci P."/>
            <person name="Chao Q."/>
            <person name="Choy N."/>
            <person name="Enju A."/>
            <person name="Goldsmith A.D."/>
            <person name="Gurjal M."/>
            <person name="Hansen N.F."/>
            <person name="Hayashizaki Y."/>
            <person name="Johnson-Hopson C."/>
            <person name="Hsuan V.W."/>
            <person name="Iida K."/>
            <person name="Karnes M."/>
            <person name="Khan S."/>
            <person name="Koesema E."/>
            <person name="Ishida J."/>
            <person name="Jiang P.X."/>
            <person name="Jones T."/>
            <person name="Kawai J."/>
            <person name="Kamiya A."/>
            <person name="Meyers C."/>
            <person name="Nakajima M."/>
            <person name="Narusaka M."/>
            <person name="Seki M."/>
            <person name="Sakurai T."/>
            <person name="Satou M."/>
            <person name="Tamse R."/>
            <person name="Vaysberg M."/>
            <person name="Wallender E.K."/>
            <person name="Wong C."/>
            <person name="Yamamura Y."/>
            <person name="Yuan S."/>
            <person name="Shinozaki K."/>
            <person name="Davis R.W."/>
            <person name="Theologis A."/>
            <person name="Ecker J.R."/>
        </authorList>
    </citation>
    <scope>NUCLEOTIDE SEQUENCE [LARGE SCALE MRNA]</scope>
    <source>
        <strain>cv. Columbia</strain>
    </source>
</reference>
<reference key="4">
    <citation type="submission" date="2006-12" db="EMBL/GenBank/DDBJ databases">
        <title>Arabidopsis ORF clones.</title>
        <authorList>
            <person name="Bautista V.R."/>
            <person name="Kim C.J."/>
            <person name="Chen H."/>
            <person name="Wu S.Y."/>
            <person name="De Los Reyes C."/>
            <person name="Ecker J.R."/>
        </authorList>
    </citation>
    <scope>NUCLEOTIDE SEQUENCE [LARGE SCALE MRNA]</scope>
    <source>
        <strain>cv. Columbia</strain>
    </source>
</reference>
<reference key="5">
    <citation type="journal article" date="2009" name="DNA Res.">
        <title>Analysis of multiple occurrences of alternative splicing events in Arabidopsis thaliana using novel sequenced full-length cDNAs.</title>
        <authorList>
            <person name="Iida K."/>
            <person name="Fukami-Kobayashi K."/>
            <person name="Toyoda A."/>
            <person name="Sakaki Y."/>
            <person name="Kobayashi M."/>
            <person name="Seki M."/>
            <person name="Shinozaki K."/>
        </authorList>
    </citation>
    <scope>NUCLEOTIDE SEQUENCE [LARGE SCALE MRNA]</scope>
    <source>
        <strain>cv. Columbia</strain>
    </source>
</reference>
<reference key="6">
    <citation type="journal article" date="2008" name="BMC Genomics">
        <title>Genome-wide and expression analysis of protein phosphatase 2C in rice and Arabidopsis.</title>
        <authorList>
            <person name="Xue T."/>
            <person name="Wang D."/>
            <person name="Zhang S."/>
            <person name="Ehlting J."/>
            <person name="Ni F."/>
            <person name="Jacab S."/>
            <person name="Zheng C."/>
            <person name="Zhong Y."/>
        </authorList>
    </citation>
    <scope>GENE FAMILY</scope>
    <scope>NOMENCLATURE</scope>
</reference>